<reference key="1">
    <citation type="journal article" date="2007" name="Nature">
        <title>Evolution of genes and genomes on the Drosophila phylogeny.</title>
        <authorList>
            <consortium name="Drosophila 12 genomes consortium"/>
        </authorList>
    </citation>
    <scope>NUCLEOTIDE SEQUENCE [LARGE SCALE GENOMIC DNA]</scope>
</reference>
<protein>
    <recommendedName>
        <fullName evidence="2">Pescadillo homolog</fullName>
    </recommendedName>
</protein>
<evidence type="ECO:0000250" key="1"/>
<evidence type="ECO:0000255" key="2">
    <source>
        <dbReference type="HAMAP-Rule" id="MF_03028"/>
    </source>
</evidence>
<evidence type="ECO:0000256" key="3">
    <source>
        <dbReference type="SAM" id="MobiDB-lite"/>
    </source>
</evidence>
<sequence>MRRPKKYESGEATQYISRRAALRKLQLSLNDFRRLCILKGVYPREPKHRRRAQKGSSEIKVLYHTKDIRFLLHESIVWTLRDYKIFAKKSNRDRAIKDFRNLKRRLALFPEIKLDHIVKERYPTFIDALKDLDDCLTLLFLFSTFPSLHLIPREQSNLCRRLTIEFLHYVIASKSLRKVFISIKGYYFQAEIKGQKVTWIVPHYYPFKPQSRQEVDFKVMSIFVEFYTIMLGFTNFRLFHGLNLAYPPQFPSSVLQDSEESLKDEASFVSDRIAALNFELLRTDKVQEDEEELDIDMELLEQDGDSKRIIKMKQEAQEVSRLRTLFKGLKFFINREVPREPLVILIRSFGGKVSWDSSIFAGSTYDEGDETITHQIVDRPSISTQYISRDYIQPQWVFDCVNQRQLLPTNKYFIGETLPPHLSPFVDSKRDSYIPPEEKALLDPSLIETHAQSDDDSEDEAQEEEETVDQELLDAQLQLAYQQETAEYKKYGGPDGVNEDEEDPEDEDDNEDDDEEEEELDEKTKRLQEEKQKMSVQSGKVHKVNKRQVHKAEVDEHRLQARMVKPRHRNLFRKLIREKQSKEKEEWLLRKKRRTIEASEKEARKTAKREARKEAAAAAAKASKLGK</sequence>
<proteinExistence type="inferred from homology"/>
<gene>
    <name type="ORF">GD22342</name>
</gene>
<organism>
    <name type="scientific">Drosophila simulans</name>
    <name type="common">Fruit fly</name>
    <dbReference type="NCBI Taxonomy" id="7240"/>
    <lineage>
        <taxon>Eukaryota</taxon>
        <taxon>Metazoa</taxon>
        <taxon>Ecdysozoa</taxon>
        <taxon>Arthropoda</taxon>
        <taxon>Hexapoda</taxon>
        <taxon>Insecta</taxon>
        <taxon>Pterygota</taxon>
        <taxon>Neoptera</taxon>
        <taxon>Endopterygota</taxon>
        <taxon>Diptera</taxon>
        <taxon>Brachycera</taxon>
        <taxon>Muscomorpha</taxon>
        <taxon>Ephydroidea</taxon>
        <taxon>Drosophilidae</taxon>
        <taxon>Drosophila</taxon>
        <taxon>Sophophora</taxon>
    </lineage>
</organism>
<dbReference type="EMBL" id="CM000361">
    <property type="protein sequence ID" value="EDX04387.1"/>
    <property type="molecule type" value="Genomic_DNA"/>
</dbReference>
<dbReference type="SMR" id="B4Q865"/>
<dbReference type="STRING" id="7240.B4Q865"/>
<dbReference type="EnsemblMetazoa" id="FBtr0222252">
    <property type="protein sequence ID" value="FBpp0220744"/>
    <property type="gene ID" value="FBgn0193749"/>
</dbReference>
<dbReference type="EnsemblMetazoa" id="XM_002078766.4">
    <property type="protein sequence ID" value="XP_002078802.1"/>
    <property type="gene ID" value="LOC6731662"/>
</dbReference>
<dbReference type="GeneID" id="6731662"/>
<dbReference type="HOGENOM" id="CLU_019619_0_0_1"/>
<dbReference type="OMA" id="QKVTWIV"/>
<dbReference type="OrthoDB" id="10264910at2759"/>
<dbReference type="PhylomeDB" id="B4Q865"/>
<dbReference type="Proteomes" id="UP000000304">
    <property type="component" value="Chromosome 2L"/>
</dbReference>
<dbReference type="Bgee" id="FBgn0193749">
    <property type="expression patterns" value="Expressed in embryo and 3 other cell types or tissues"/>
</dbReference>
<dbReference type="GO" id="GO:0005730">
    <property type="term" value="C:nucleolus"/>
    <property type="evidence" value="ECO:0000250"/>
    <property type="project" value="UniProtKB"/>
</dbReference>
<dbReference type="GO" id="GO:0005654">
    <property type="term" value="C:nucleoplasm"/>
    <property type="evidence" value="ECO:0000250"/>
    <property type="project" value="UniProtKB"/>
</dbReference>
<dbReference type="GO" id="GO:0070545">
    <property type="term" value="C:PeBoW complex"/>
    <property type="evidence" value="ECO:0007669"/>
    <property type="project" value="TreeGrafter"/>
</dbReference>
<dbReference type="GO" id="GO:0030687">
    <property type="term" value="C:preribosome, large subunit precursor"/>
    <property type="evidence" value="ECO:0007669"/>
    <property type="project" value="UniProtKB-UniRule"/>
</dbReference>
<dbReference type="GO" id="GO:0043021">
    <property type="term" value="F:ribonucleoprotein complex binding"/>
    <property type="evidence" value="ECO:0007669"/>
    <property type="project" value="UniProtKB-UniRule"/>
</dbReference>
<dbReference type="GO" id="GO:0003723">
    <property type="term" value="F:RNA binding"/>
    <property type="evidence" value="ECO:0007669"/>
    <property type="project" value="TreeGrafter"/>
</dbReference>
<dbReference type="GO" id="GO:0000466">
    <property type="term" value="P:maturation of 5.8S rRNA from tricistronic rRNA transcript (SSU-rRNA, 5.8S rRNA, LSU-rRNA)"/>
    <property type="evidence" value="ECO:0007669"/>
    <property type="project" value="UniProtKB-UniRule"/>
</dbReference>
<dbReference type="GO" id="GO:0000463">
    <property type="term" value="P:maturation of LSU-rRNA from tricistronic rRNA transcript (SSU-rRNA, 5.8S rRNA, LSU-rRNA)"/>
    <property type="evidence" value="ECO:0000250"/>
    <property type="project" value="UniProtKB"/>
</dbReference>
<dbReference type="CDD" id="cd17709">
    <property type="entry name" value="BRCT_pescadillo_like"/>
    <property type="match status" value="1"/>
</dbReference>
<dbReference type="FunFam" id="3.40.50.10190:FF:000002">
    <property type="entry name" value="Pescadillo homolog"/>
    <property type="match status" value="1"/>
</dbReference>
<dbReference type="Gene3D" id="3.40.50.10190">
    <property type="entry name" value="BRCT domain"/>
    <property type="match status" value="1"/>
</dbReference>
<dbReference type="HAMAP" id="MF_03028">
    <property type="entry name" value="Pescadillo"/>
    <property type="match status" value="1"/>
</dbReference>
<dbReference type="InterPro" id="IPR001357">
    <property type="entry name" value="BRCT_dom"/>
</dbReference>
<dbReference type="InterPro" id="IPR036420">
    <property type="entry name" value="BRCT_dom_sf"/>
</dbReference>
<dbReference type="InterPro" id="IPR010613">
    <property type="entry name" value="PES"/>
</dbReference>
<dbReference type="PANTHER" id="PTHR12221">
    <property type="entry name" value="PESCADILLO - RELATED"/>
    <property type="match status" value="1"/>
</dbReference>
<dbReference type="PANTHER" id="PTHR12221:SF6">
    <property type="entry name" value="PESCADILLO HOMOLOG"/>
    <property type="match status" value="1"/>
</dbReference>
<dbReference type="Pfam" id="PF16589">
    <property type="entry name" value="BRCT_2"/>
    <property type="match status" value="1"/>
</dbReference>
<dbReference type="Pfam" id="PF06732">
    <property type="entry name" value="Pescadillo_N"/>
    <property type="match status" value="1"/>
</dbReference>
<dbReference type="SMART" id="SM00292">
    <property type="entry name" value="BRCT"/>
    <property type="match status" value="1"/>
</dbReference>
<dbReference type="SUPFAM" id="SSF52113">
    <property type="entry name" value="BRCT domain"/>
    <property type="match status" value="1"/>
</dbReference>
<dbReference type="PROSITE" id="PS50172">
    <property type="entry name" value="BRCT"/>
    <property type="match status" value="1"/>
</dbReference>
<accession>B4Q865</accession>
<name>PESC_DROSI</name>
<comment type="function">
    <text evidence="2">Required for maturation of ribosomal RNAs and formation of the large ribosomal subunit.</text>
</comment>
<comment type="subcellular location">
    <subcellularLocation>
        <location evidence="2">Nucleus</location>
        <location evidence="2">Nucleolus</location>
    </subcellularLocation>
    <subcellularLocation>
        <location evidence="2">Nucleus</location>
        <location evidence="2">Nucleoplasm</location>
    </subcellularLocation>
</comment>
<comment type="similarity">
    <text evidence="2">Belongs to the pescadillo family.</text>
</comment>
<keyword id="KW-0175">Coiled coil</keyword>
<keyword id="KW-0539">Nucleus</keyword>
<keyword id="KW-0597">Phosphoprotein</keyword>
<keyword id="KW-1185">Reference proteome</keyword>
<keyword id="KW-0690">Ribosome biogenesis</keyword>
<keyword id="KW-0698">rRNA processing</keyword>
<feature type="chain" id="PRO_0000370460" description="Pescadillo homolog">
    <location>
        <begin position="1"/>
        <end position="627"/>
    </location>
</feature>
<feature type="domain" description="BRCT" evidence="2">
    <location>
        <begin position="321"/>
        <end position="414"/>
    </location>
</feature>
<feature type="region of interest" description="Disordered" evidence="3">
    <location>
        <begin position="450"/>
        <end position="469"/>
    </location>
</feature>
<feature type="region of interest" description="Disordered" evidence="3">
    <location>
        <begin position="488"/>
        <end position="566"/>
    </location>
</feature>
<feature type="region of interest" description="Disordered" evidence="3">
    <location>
        <begin position="595"/>
        <end position="627"/>
    </location>
</feature>
<feature type="coiled-coil region" evidence="2">
    <location>
        <begin position="582"/>
        <end position="625"/>
    </location>
</feature>
<feature type="compositionally biased region" description="Acidic residues" evidence="3">
    <location>
        <begin position="454"/>
        <end position="469"/>
    </location>
</feature>
<feature type="compositionally biased region" description="Acidic residues" evidence="3">
    <location>
        <begin position="497"/>
        <end position="521"/>
    </location>
</feature>
<feature type="compositionally biased region" description="Basic and acidic residues" evidence="3">
    <location>
        <begin position="522"/>
        <end position="533"/>
    </location>
</feature>
<feature type="compositionally biased region" description="Basic residues" evidence="3">
    <location>
        <begin position="540"/>
        <end position="549"/>
    </location>
</feature>
<feature type="compositionally biased region" description="Basic and acidic residues" evidence="3">
    <location>
        <begin position="550"/>
        <end position="559"/>
    </location>
</feature>
<feature type="compositionally biased region" description="Basic and acidic residues" evidence="3">
    <location>
        <begin position="595"/>
        <end position="615"/>
    </location>
</feature>
<feature type="compositionally biased region" description="Low complexity" evidence="3">
    <location>
        <begin position="616"/>
        <end position="627"/>
    </location>
</feature>
<feature type="modified residue" description="Phosphoserine" evidence="1">
    <location>
        <position position="453"/>
    </location>
</feature>
<feature type="modified residue" description="Phosphoserine" evidence="1">
    <location>
        <position position="457"/>
    </location>
</feature>